<dbReference type="EMBL" id="AE009947">
    <property type="protein sequence ID" value="AAT44709.1"/>
    <property type="molecule type" value="Genomic_DNA"/>
</dbReference>
<dbReference type="SMR" id="Q6L383"/>
<dbReference type="GO" id="GO:0009535">
    <property type="term" value="C:chloroplast thylakoid membrane"/>
    <property type="evidence" value="ECO:0007669"/>
    <property type="project" value="UniProtKB-SubCell"/>
</dbReference>
<dbReference type="GO" id="GO:0009539">
    <property type="term" value="C:photosystem II reaction center"/>
    <property type="evidence" value="ECO:0007669"/>
    <property type="project" value="InterPro"/>
</dbReference>
<dbReference type="GO" id="GO:0009055">
    <property type="term" value="F:electron transfer activity"/>
    <property type="evidence" value="ECO:0007669"/>
    <property type="project" value="UniProtKB-UniRule"/>
</dbReference>
<dbReference type="GO" id="GO:0020037">
    <property type="term" value="F:heme binding"/>
    <property type="evidence" value="ECO:0007669"/>
    <property type="project" value="InterPro"/>
</dbReference>
<dbReference type="GO" id="GO:0005506">
    <property type="term" value="F:iron ion binding"/>
    <property type="evidence" value="ECO:0007669"/>
    <property type="project" value="UniProtKB-UniRule"/>
</dbReference>
<dbReference type="GO" id="GO:0009767">
    <property type="term" value="P:photosynthetic electron transport chain"/>
    <property type="evidence" value="ECO:0007669"/>
    <property type="project" value="InterPro"/>
</dbReference>
<dbReference type="Gene3D" id="1.20.5.860">
    <property type="entry name" value="Photosystem II cytochrome b559, alpha subunit"/>
    <property type="match status" value="1"/>
</dbReference>
<dbReference type="HAMAP" id="MF_00642">
    <property type="entry name" value="PSII_PsbE"/>
    <property type="match status" value="1"/>
</dbReference>
<dbReference type="InterPro" id="IPR006217">
    <property type="entry name" value="PSII_cyt_b559_asu"/>
</dbReference>
<dbReference type="InterPro" id="IPR037025">
    <property type="entry name" value="PSII_cyt_b559_asu_sf"/>
</dbReference>
<dbReference type="InterPro" id="IPR006216">
    <property type="entry name" value="PSII_cyt_b559_CS"/>
</dbReference>
<dbReference type="InterPro" id="IPR013081">
    <property type="entry name" value="PSII_cyt_b559_N"/>
</dbReference>
<dbReference type="InterPro" id="IPR013082">
    <property type="entry name" value="PSII_cytb559_asu_lum"/>
</dbReference>
<dbReference type="NCBIfam" id="TIGR01332">
    <property type="entry name" value="cyt_b559_alpha"/>
    <property type="match status" value="1"/>
</dbReference>
<dbReference type="PANTHER" id="PTHR33391:SF13">
    <property type="entry name" value="CYTOCHROME B559 SUBUNIT ALPHA"/>
    <property type="match status" value="1"/>
</dbReference>
<dbReference type="PANTHER" id="PTHR33391">
    <property type="entry name" value="CYTOCHROME B559 SUBUNIT BETA-RELATED"/>
    <property type="match status" value="1"/>
</dbReference>
<dbReference type="Pfam" id="PF00283">
    <property type="entry name" value="Cytochrom_B559"/>
    <property type="match status" value="1"/>
</dbReference>
<dbReference type="Pfam" id="PF00284">
    <property type="entry name" value="Cytochrom_B559a"/>
    <property type="match status" value="1"/>
</dbReference>
<dbReference type="PIRSF" id="PIRSF000036">
    <property type="entry name" value="PsbE"/>
    <property type="match status" value="1"/>
</dbReference>
<dbReference type="SUPFAM" id="SSF161045">
    <property type="entry name" value="Cytochrome b559 subunits"/>
    <property type="match status" value="1"/>
</dbReference>
<dbReference type="PROSITE" id="PS00537">
    <property type="entry name" value="CYTOCHROME_B559"/>
    <property type="match status" value="1"/>
</dbReference>
<geneLocation type="chloroplast"/>
<comment type="function">
    <text evidence="1">This b-type cytochrome is tightly associated with the reaction center of photosystem II (PSII). PSII is a light-driven water:plastoquinone oxidoreductase that uses light energy to abstract electrons from H(2)O, generating O(2) and a proton gradient subsequently used for ATP formation. It consists of a core antenna complex that captures photons, and an electron transfer chain that converts photonic excitation into a charge separation.</text>
</comment>
<comment type="cofactor">
    <cofactor evidence="1">
        <name>heme b</name>
        <dbReference type="ChEBI" id="CHEBI:60344"/>
    </cofactor>
    <text evidence="1">With its partner (PsbF) binds heme. PSII binds additional chlorophylls, carotenoids and specific lipids.</text>
</comment>
<comment type="subunit">
    <text evidence="1">Heterodimer of an alpha subunit and a beta subunit. PSII is composed of 1 copy each of membrane proteins PsbA, PsbB, PsbC, PsbD, PsbE, PsbF, PsbH, PsbI, PsbJ, PsbK, PsbL, PsbM, PsbT, PsbX, PsbY, PsbZ, Psb30/Ycf12, at least 3 peripheral proteins of the oxygen-evolving complex and a large number of cofactors. It forms dimeric complexes.</text>
</comment>
<comment type="subcellular location">
    <subcellularLocation>
        <location evidence="1">Plastid</location>
        <location evidence="1">Chloroplast thylakoid membrane</location>
        <topology evidence="1">Single-pass membrane protein</topology>
    </subcellularLocation>
</comment>
<comment type="similarity">
    <text evidence="1">Belongs to the PsbE/PsbF family.</text>
</comment>
<reference key="1">
    <citation type="journal article" date="2004" name="Curr. Genet.">
        <title>Structural features and transcript-editing analysis of sugarcane (Saccharum officinarum L.) chloroplast genome.</title>
        <authorList>
            <person name="Calsa T. Jr."/>
            <person name="Carraro D.M."/>
            <person name="Benatti M.R."/>
            <person name="Barbosa A.C."/>
            <person name="Kitajima J.P."/>
            <person name="Carrer H."/>
        </authorList>
    </citation>
    <scope>NUCLEOTIDE SEQUENCE [LARGE SCALE GENOMIC DNA]</scope>
    <source>
        <strain>cv. SP-80-3280</strain>
    </source>
</reference>
<proteinExistence type="inferred from homology"/>
<organism>
    <name type="scientific">Saccharum hybrid</name>
    <name type="common">Sugarcane</name>
    <dbReference type="NCBI Taxonomy" id="15819"/>
    <lineage>
        <taxon>Eukaryota</taxon>
        <taxon>Viridiplantae</taxon>
        <taxon>Streptophyta</taxon>
        <taxon>Embryophyta</taxon>
        <taxon>Tracheophyta</taxon>
        <taxon>Spermatophyta</taxon>
        <taxon>Magnoliopsida</taxon>
        <taxon>Liliopsida</taxon>
        <taxon>Poales</taxon>
        <taxon>Poaceae</taxon>
        <taxon>PACMAD clade</taxon>
        <taxon>Panicoideae</taxon>
        <taxon>Andropogonodae</taxon>
        <taxon>Andropogoneae</taxon>
        <taxon>Saccharinae</taxon>
        <taxon>Saccharum</taxon>
    </lineage>
</organism>
<sequence length="83" mass="9445">MSGSTGERSFADIITSIRYWVIHSITIPSLFIAGWLFVSTGLAYDVFGSPRPNEYFTESRQGIPLITDRFDSLEQLDEFSRSF</sequence>
<keyword id="KW-0150">Chloroplast</keyword>
<keyword id="KW-0249">Electron transport</keyword>
<keyword id="KW-0349">Heme</keyword>
<keyword id="KW-0408">Iron</keyword>
<keyword id="KW-0472">Membrane</keyword>
<keyword id="KW-0479">Metal-binding</keyword>
<keyword id="KW-0602">Photosynthesis</keyword>
<keyword id="KW-0604">Photosystem II</keyword>
<keyword id="KW-0934">Plastid</keyword>
<keyword id="KW-0793">Thylakoid</keyword>
<keyword id="KW-0812">Transmembrane</keyword>
<keyword id="KW-1133">Transmembrane helix</keyword>
<keyword id="KW-0813">Transport</keyword>
<name>PSBE_SACHY</name>
<evidence type="ECO:0000255" key="1">
    <source>
        <dbReference type="HAMAP-Rule" id="MF_00642"/>
    </source>
</evidence>
<accession>Q6L383</accession>
<feature type="chain" id="PRO_0000200336" description="Cytochrome b559 subunit alpha">
    <location>
        <begin position="1"/>
        <end position="83"/>
    </location>
</feature>
<feature type="transmembrane region" description="Helical" evidence="1">
    <location>
        <begin position="21"/>
        <end position="35"/>
    </location>
</feature>
<feature type="binding site" description="axial binding residue" evidence="1">
    <location>
        <position position="23"/>
    </location>
    <ligand>
        <name>heme</name>
        <dbReference type="ChEBI" id="CHEBI:30413"/>
        <note>ligand shared with beta subunit</note>
    </ligand>
    <ligandPart>
        <name>Fe</name>
        <dbReference type="ChEBI" id="CHEBI:18248"/>
    </ligandPart>
</feature>
<protein>
    <recommendedName>
        <fullName evidence="1">Cytochrome b559 subunit alpha</fullName>
    </recommendedName>
    <alternativeName>
        <fullName evidence="1">PSII reaction center subunit V</fullName>
    </alternativeName>
</protein>
<gene>
    <name evidence="1" type="primary">psbE</name>
    <name type="ordered locus">PS140</name>
</gene>